<name>RS19_CENSY</name>
<reference key="1">
    <citation type="journal article" date="2006" name="Proc. Natl. Acad. Sci. U.S.A.">
        <title>Genomic analysis of the uncultivated marine crenarchaeote Cenarchaeum symbiosum.</title>
        <authorList>
            <person name="Hallam S.J."/>
            <person name="Konstantinidis K.T."/>
            <person name="Putnam N."/>
            <person name="Schleper C."/>
            <person name="Watanabe Y."/>
            <person name="Sugahara J."/>
            <person name="Preston C."/>
            <person name="de la Torre J."/>
            <person name="Richardson P.M."/>
            <person name="DeLong E.F."/>
        </authorList>
    </citation>
    <scope>NUCLEOTIDE SEQUENCE [LARGE SCALE GENOMIC DNA]</scope>
    <source>
        <strain>A</strain>
    </source>
</reference>
<proteinExistence type="inferred from homology"/>
<protein>
    <recommendedName>
        <fullName evidence="1">Small ribosomal subunit protein uS19</fullName>
    </recommendedName>
    <alternativeName>
        <fullName evidence="2">30S ribosomal protein S19</fullName>
    </alternativeName>
</protein>
<sequence>MVKKFEYRGKPAEELESMPLDSLFRLFNSRQRRSLTRGITDGKRKLIREIKDARAGKEGNPIKTHLRDLIVLPSMTGVTVNVFSGKEFRPVEITTEMIGHYLGEYVITNKRVSHGAPGVGASRSSLYVPLK</sequence>
<gene>
    <name evidence="1" type="primary">rps19</name>
    <name type="ordered locus">CENSYa_0861</name>
</gene>
<comment type="function">
    <text evidence="1">Protein S19 forms a complex with S13 that binds strongly to the 16S ribosomal RNA.</text>
</comment>
<comment type="similarity">
    <text evidence="1">Belongs to the universal ribosomal protein uS19 family.</text>
</comment>
<organism>
    <name type="scientific">Cenarchaeum symbiosum (strain A)</name>
    <dbReference type="NCBI Taxonomy" id="414004"/>
    <lineage>
        <taxon>Archaea</taxon>
        <taxon>Nitrososphaerota</taxon>
        <taxon>Candidatus Cenarchaeales</taxon>
        <taxon>Candidatus Cenarchaeaceae</taxon>
        <taxon>Candidatus Cenarchaeum</taxon>
    </lineage>
</organism>
<dbReference type="EMBL" id="DP000238">
    <property type="protein sequence ID" value="ABK77494.1"/>
    <property type="molecule type" value="Genomic_DNA"/>
</dbReference>
<dbReference type="SMR" id="A0RVX7"/>
<dbReference type="STRING" id="414004.CENSYa_0861"/>
<dbReference type="EnsemblBacteria" id="ABK77494">
    <property type="protein sequence ID" value="ABK77494"/>
    <property type="gene ID" value="CENSYa_0861"/>
</dbReference>
<dbReference type="KEGG" id="csy:CENSYa_0861"/>
<dbReference type="PATRIC" id="fig|414004.10.peg.795"/>
<dbReference type="HOGENOM" id="CLU_097347_1_0_2"/>
<dbReference type="Proteomes" id="UP000000758">
    <property type="component" value="Chromosome"/>
</dbReference>
<dbReference type="GO" id="GO:0022627">
    <property type="term" value="C:cytosolic small ribosomal subunit"/>
    <property type="evidence" value="ECO:0007669"/>
    <property type="project" value="TreeGrafter"/>
</dbReference>
<dbReference type="GO" id="GO:0019843">
    <property type="term" value="F:rRNA binding"/>
    <property type="evidence" value="ECO:0007669"/>
    <property type="project" value="UniProtKB-UniRule"/>
</dbReference>
<dbReference type="GO" id="GO:0003735">
    <property type="term" value="F:structural constituent of ribosome"/>
    <property type="evidence" value="ECO:0007669"/>
    <property type="project" value="InterPro"/>
</dbReference>
<dbReference type="GO" id="GO:0000028">
    <property type="term" value="P:ribosomal small subunit assembly"/>
    <property type="evidence" value="ECO:0007669"/>
    <property type="project" value="TreeGrafter"/>
</dbReference>
<dbReference type="GO" id="GO:0006412">
    <property type="term" value="P:translation"/>
    <property type="evidence" value="ECO:0007669"/>
    <property type="project" value="UniProtKB-UniRule"/>
</dbReference>
<dbReference type="FunFam" id="3.30.860.10:FF:000002">
    <property type="entry name" value="40S ribosomal protein S15"/>
    <property type="match status" value="1"/>
</dbReference>
<dbReference type="Gene3D" id="3.30.860.10">
    <property type="entry name" value="30s Ribosomal Protein S19, Chain A"/>
    <property type="match status" value="1"/>
</dbReference>
<dbReference type="HAMAP" id="MF_00531">
    <property type="entry name" value="Ribosomal_uS19"/>
    <property type="match status" value="1"/>
</dbReference>
<dbReference type="InterPro" id="IPR002222">
    <property type="entry name" value="Ribosomal_uS19"/>
</dbReference>
<dbReference type="InterPro" id="IPR020934">
    <property type="entry name" value="Ribosomal_uS19_CS"/>
</dbReference>
<dbReference type="InterPro" id="IPR005713">
    <property type="entry name" value="Ribosomal_uS19_euk/arc"/>
</dbReference>
<dbReference type="InterPro" id="IPR023575">
    <property type="entry name" value="Ribosomal_uS19_SF"/>
</dbReference>
<dbReference type="NCBIfam" id="NF003121">
    <property type="entry name" value="PRK04038.1"/>
    <property type="match status" value="1"/>
</dbReference>
<dbReference type="NCBIfam" id="TIGR01025">
    <property type="entry name" value="uS19_arch"/>
    <property type="match status" value="1"/>
</dbReference>
<dbReference type="PANTHER" id="PTHR11880">
    <property type="entry name" value="RIBOSOMAL PROTEIN S19P FAMILY MEMBER"/>
    <property type="match status" value="1"/>
</dbReference>
<dbReference type="PANTHER" id="PTHR11880:SF2">
    <property type="entry name" value="SMALL RIBOSOMAL SUBUNIT PROTEIN US19"/>
    <property type="match status" value="1"/>
</dbReference>
<dbReference type="Pfam" id="PF00203">
    <property type="entry name" value="Ribosomal_S19"/>
    <property type="match status" value="1"/>
</dbReference>
<dbReference type="PIRSF" id="PIRSF002144">
    <property type="entry name" value="Ribosomal_S19"/>
    <property type="match status" value="1"/>
</dbReference>
<dbReference type="PRINTS" id="PR00975">
    <property type="entry name" value="RIBOSOMALS19"/>
</dbReference>
<dbReference type="SUPFAM" id="SSF54570">
    <property type="entry name" value="Ribosomal protein S19"/>
    <property type="match status" value="1"/>
</dbReference>
<dbReference type="PROSITE" id="PS00323">
    <property type="entry name" value="RIBOSOMAL_S19"/>
    <property type="match status" value="1"/>
</dbReference>
<evidence type="ECO:0000255" key="1">
    <source>
        <dbReference type="HAMAP-Rule" id="MF_00531"/>
    </source>
</evidence>
<evidence type="ECO:0000305" key="2"/>
<feature type="chain" id="PRO_0000354309" description="Small ribosomal subunit protein uS19">
    <location>
        <begin position="1"/>
        <end position="131"/>
    </location>
</feature>
<accession>A0RVX7</accession>
<keyword id="KW-1185">Reference proteome</keyword>
<keyword id="KW-0687">Ribonucleoprotein</keyword>
<keyword id="KW-0689">Ribosomal protein</keyword>
<keyword id="KW-0694">RNA-binding</keyword>
<keyword id="KW-0699">rRNA-binding</keyword>